<organism>
    <name type="scientific">Setaria italica</name>
    <name type="common">Foxtail millet</name>
    <name type="synonym">Panicum italicum</name>
    <dbReference type="NCBI Taxonomy" id="4555"/>
    <lineage>
        <taxon>Eukaryota</taxon>
        <taxon>Viridiplantae</taxon>
        <taxon>Streptophyta</taxon>
        <taxon>Embryophyta</taxon>
        <taxon>Tracheophyta</taxon>
        <taxon>Spermatophyta</taxon>
        <taxon>Magnoliopsida</taxon>
        <taxon>Liliopsida</taxon>
        <taxon>Poales</taxon>
        <taxon>Poaceae</taxon>
        <taxon>PACMAD clade</taxon>
        <taxon>Panicoideae</taxon>
        <taxon>Panicodae</taxon>
        <taxon>Paniceae</taxon>
        <taxon>Cenchrinae</taxon>
        <taxon>Setaria</taxon>
    </lineage>
</organism>
<sequence length="67" mass="7679">SGERPWKCCDLQTCTKSIPAFCRCRDLLEQCSDACKECGKVRDSDPPRYICQDVYRGIPAPMCHEHQ</sequence>
<evidence type="ECO:0000250" key="1"/>
<evidence type="ECO:0000250" key="2">
    <source>
        <dbReference type="UniProtKB" id="P80321"/>
    </source>
</evidence>
<evidence type="ECO:0000305" key="3"/>
<name>IBB2_SETIT</name>
<protein>
    <recommendedName>
        <fullName>Bowman-Birk type major trypsin inhibitor</fullName>
    </recommendedName>
    <alternativeName>
        <fullName>FMTI-II</fullName>
    </alternativeName>
</protein>
<keyword id="KW-0903">Direct protein sequencing</keyword>
<keyword id="KW-1015">Disulfide bond</keyword>
<keyword id="KW-0646">Protease inhibitor</keyword>
<keyword id="KW-1185">Reference proteome</keyword>
<keyword id="KW-0722">Serine protease inhibitor</keyword>
<dbReference type="PIR" id="JX0136">
    <property type="entry name" value="TIILF2"/>
</dbReference>
<dbReference type="SMR" id="P19860"/>
<dbReference type="InParanoid" id="P19860"/>
<dbReference type="Proteomes" id="UP000004995">
    <property type="component" value="Unassembled WGS sequence"/>
</dbReference>
<dbReference type="GO" id="GO:0005576">
    <property type="term" value="C:extracellular region"/>
    <property type="evidence" value="ECO:0007669"/>
    <property type="project" value="InterPro"/>
</dbReference>
<dbReference type="GO" id="GO:0004867">
    <property type="term" value="F:serine-type endopeptidase inhibitor activity"/>
    <property type="evidence" value="ECO:0007669"/>
    <property type="project" value="UniProtKB-KW"/>
</dbReference>
<dbReference type="CDD" id="cd00023">
    <property type="entry name" value="BBI"/>
    <property type="match status" value="1"/>
</dbReference>
<dbReference type="Gene3D" id="2.10.69.10">
    <property type="entry name" value="Cysteine Protease (Bromelain) Inhibitor, subunit H"/>
    <property type="match status" value="1"/>
</dbReference>
<dbReference type="InterPro" id="IPR035995">
    <property type="entry name" value="Bowman-Birk_prot_inh"/>
</dbReference>
<dbReference type="InterPro" id="IPR000877">
    <property type="entry name" value="Prot_inh_BBI"/>
</dbReference>
<dbReference type="PANTHER" id="PTHR33479">
    <property type="entry name" value="BOWMAN-BIRK TYPE BRAN TRYPSIN INHIBITOR"/>
    <property type="match status" value="1"/>
</dbReference>
<dbReference type="PANTHER" id="PTHR33479:SF22">
    <property type="entry name" value="BOWMAN-BIRK TYPE BRAN TRYPSIN INHIBITOR"/>
    <property type="match status" value="1"/>
</dbReference>
<dbReference type="Pfam" id="PF00228">
    <property type="entry name" value="Bowman-Birk_leg"/>
    <property type="match status" value="2"/>
</dbReference>
<dbReference type="SMART" id="SM00269">
    <property type="entry name" value="BowB"/>
    <property type="match status" value="1"/>
</dbReference>
<dbReference type="SUPFAM" id="SSF57247">
    <property type="entry name" value="Bowman-Birk inhibitor, BBI"/>
    <property type="match status" value="1"/>
</dbReference>
<dbReference type="PROSITE" id="PS00281">
    <property type="entry name" value="BOWMAN_BIRK"/>
    <property type="match status" value="1"/>
</dbReference>
<proteinExistence type="evidence at protein level"/>
<accession>P19860</accession>
<feature type="chain" id="PRO_0000105839" description="Bowman-Birk type major trypsin inhibitor">
    <location>
        <begin position="1"/>
        <end position="67"/>
    </location>
</feature>
<feature type="site" description="Reactive bond for trypsin" evidence="1">
    <location>
        <begin position="16"/>
        <end position="17"/>
    </location>
</feature>
<feature type="disulfide bond" evidence="2">
    <location>
        <begin position="8"/>
        <end position="63"/>
    </location>
</feature>
<feature type="disulfide bond" evidence="2">
    <location>
        <begin position="9"/>
        <end position="24"/>
    </location>
</feature>
<feature type="disulfide bond" evidence="2">
    <location>
        <begin position="14"/>
        <end position="22"/>
    </location>
</feature>
<feature type="disulfide bond" evidence="2">
    <location>
        <begin position="31"/>
        <end position="38"/>
    </location>
</feature>
<feature type="disulfide bond" evidence="2">
    <location>
        <begin position="35"/>
        <end position="51"/>
    </location>
</feature>
<comment type="similarity">
    <text evidence="3">Belongs to the Bowman-Birk serine protease inhibitor family.</text>
</comment>
<reference key="1">
    <citation type="journal article" date="1990" name="J. Biochem.">
        <title>The complete amino acid sequence of a major trypsin inhibitor from seeds of foxtail millet (Setaria italica).</title>
        <authorList>
            <person name="Tashiro M."/>
            <person name="Asao T."/>
            <person name="Hirata C."/>
            <person name="Takahashi K."/>
            <person name="Kanamori M."/>
        </authorList>
    </citation>
    <scope>PROTEIN SEQUENCE</scope>
</reference>